<feature type="signal peptide" evidence="2">
    <location>
        <begin position="1"/>
        <end position="25"/>
    </location>
</feature>
<feature type="propeptide" id="PRO_0000003747">
    <location>
        <begin position="26"/>
        <end position="99"/>
    </location>
</feature>
<feature type="chain" id="PRO_0000003748" description="Cadherin-3">
    <location>
        <begin position="100"/>
        <end position="822"/>
    </location>
</feature>
<feature type="topological domain" description="Extracellular" evidence="2">
    <location>
        <begin position="100"/>
        <end position="647"/>
    </location>
</feature>
<feature type="transmembrane region" description="Helical" evidence="2">
    <location>
        <begin position="648"/>
        <end position="670"/>
    </location>
</feature>
<feature type="topological domain" description="Cytoplasmic" evidence="2">
    <location>
        <begin position="671"/>
        <end position="822"/>
    </location>
</feature>
<feature type="domain" description="Cadherin 1" evidence="3">
    <location>
        <begin position="100"/>
        <end position="207"/>
    </location>
</feature>
<feature type="domain" description="Cadherin 2" evidence="3">
    <location>
        <begin position="208"/>
        <end position="320"/>
    </location>
</feature>
<feature type="domain" description="Cadherin 3" evidence="3">
    <location>
        <begin position="321"/>
        <end position="432"/>
    </location>
</feature>
<feature type="domain" description="Cadherin 4" evidence="3">
    <location>
        <begin position="433"/>
        <end position="538"/>
    </location>
</feature>
<feature type="domain" description="Cadherin 5" evidence="3">
    <location>
        <begin position="539"/>
        <end position="645"/>
    </location>
</feature>
<feature type="glycosylation site" description="N-linked (GlcNAc...) asparagine" evidence="2">
    <location>
        <position position="192"/>
    </location>
</feature>
<feature type="glycosylation site" description="N-linked (GlcNAc...) asparagine" evidence="2">
    <location>
        <position position="558"/>
    </location>
</feature>
<feature type="sequence conflict" description="In Ref. 1; CAA29646." evidence="5" ref="1">
    <original>S</original>
    <variation>W</variation>
    <location>
        <position position="351"/>
    </location>
</feature>
<feature type="sequence conflict" description="In Ref. 1; CAA29646." evidence="5" ref="1">
    <original>A</original>
    <variation>P</variation>
    <location>
        <position position="757"/>
    </location>
</feature>
<feature type="sequence conflict" description="In Ref. 1; CAA29646." evidence="5" ref="1">
    <original>L</original>
    <variation>M</variation>
    <location>
        <position position="771"/>
    </location>
</feature>
<feature type="strand" evidence="6">
    <location>
        <begin position="106"/>
        <end position="111"/>
    </location>
</feature>
<feature type="strand" evidence="6">
    <location>
        <begin position="116"/>
        <end position="122"/>
    </location>
</feature>
<feature type="helix" evidence="6">
    <location>
        <begin position="126"/>
        <end position="128"/>
    </location>
</feature>
<feature type="strand" evidence="6">
    <location>
        <begin position="133"/>
        <end position="140"/>
    </location>
</feature>
<feature type="turn" evidence="6">
    <location>
        <begin position="141"/>
        <end position="143"/>
    </location>
</feature>
<feature type="strand" evidence="6">
    <location>
        <begin position="144"/>
        <end position="146"/>
    </location>
</feature>
<feature type="strand" evidence="6">
    <location>
        <begin position="149"/>
        <end position="152"/>
    </location>
</feature>
<feature type="turn" evidence="6">
    <location>
        <begin position="154"/>
        <end position="156"/>
    </location>
</feature>
<feature type="strand" evidence="6">
    <location>
        <begin position="158"/>
        <end position="161"/>
    </location>
</feature>
<feature type="turn" evidence="6">
    <location>
        <begin position="167"/>
        <end position="169"/>
    </location>
</feature>
<feature type="strand" evidence="6">
    <location>
        <begin position="171"/>
        <end position="181"/>
    </location>
</feature>
<feature type="strand" evidence="6">
    <location>
        <begin position="191"/>
        <end position="198"/>
    </location>
</feature>
<feature type="strand" evidence="6">
    <location>
        <begin position="206"/>
        <end position="208"/>
    </location>
</feature>
<feature type="strand" evidence="6">
    <location>
        <begin position="210"/>
        <end position="217"/>
    </location>
</feature>
<feature type="strand" evidence="6">
    <location>
        <begin position="225"/>
        <end position="228"/>
    </location>
</feature>
<feature type="strand" evidence="6">
    <location>
        <begin position="237"/>
        <end position="241"/>
    </location>
</feature>
<feature type="strand" evidence="6">
    <location>
        <begin position="246"/>
        <end position="254"/>
    </location>
</feature>
<feature type="strand" evidence="6">
    <location>
        <begin position="262"/>
        <end position="264"/>
    </location>
</feature>
<feature type="turn" evidence="6">
    <location>
        <begin position="266"/>
        <end position="268"/>
    </location>
</feature>
<feature type="strand" evidence="6">
    <location>
        <begin position="270"/>
        <end position="273"/>
    </location>
</feature>
<feature type="turn" evidence="6">
    <location>
        <begin position="280"/>
        <end position="282"/>
    </location>
</feature>
<feature type="strand" evidence="6">
    <location>
        <begin position="284"/>
        <end position="294"/>
    </location>
</feature>
<feature type="helix" evidence="6">
    <location>
        <begin position="295"/>
        <end position="297"/>
    </location>
</feature>
<feature type="strand" evidence="6">
    <location>
        <begin position="301"/>
        <end position="311"/>
    </location>
</feature>
<organism>
    <name type="scientific">Mus musculus</name>
    <name type="common">Mouse</name>
    <dbReference type="NCBI Taxonomy" id="10090"/>
    <lineage>
        <taxon>Eukaryota</taxon>
        <taxon>Metazoa</taxon>
        <taxon>Chordata</taxon>
        <taxon>Craniata</taxon>
        <taxon>Vertebrata</taxon>
        <taxon>Euteleostomi</taxon>
        <taxon>Mammalia</taxon>
        <taxon>Eutheria</taxon>
        <taxon>Euarchontoglires</taxon>
        <taxon>Glires</taxon>
        <taxon>Rodentia</taxon>
        <taxon>Myomorpha</taxon>
        <taxon>Muroidea</taxon>
        <taxon>Muridae</taxon>
        <taxon>Murinae</taxon>
        <taxon>Mus</taxon>
        <taxon>Mus</taxon>
    </lineage>
</organism>
<protein>
    <recommendedName>
        <fullName>Cadherin-3</fullName>
    </recommendedName>
    <alternativeName>
        <fullName>Placental cadherin</fullName>
        <shortName>P-cadherin</shortName>
    </alternativeName>
</protein>
<dbReference type="EMBL" id="X06340">
    <property type="protein sequence ID" value="CAA29646.1"/>
    <property type="molecule type" value="mRNA"/>
</dbReference>
<dbReference type="EMBL" id="X68057">
    <property type="status" value="NOT_ANNOTATED_CDS"/>
    <property type="molecule type" value="Genomic_DNA"/>
</dbReference>
<dbReference type="EMBL" id="AK031265">
    <property type="protein sequence ID" value="BAC27327.1"/>
    <property type="molecule type" value="mRNA"/>
</dbReference>
<dbReference type="EMBL" id="CH466525">
    <property type="protein sequence ID" value="EDL11370.1"/>
    <property type="molecule type" value="Genomic_DNA"/>
</dbReference>
<dbReference type="EMBL" id="BC098459">
    <property type="protein sequence ID" value="AAH98459.1"/>
    <property type="molecule type" value="mRNA"/>
</dbReference>
<dbReference type="EMBL" id="D12688">
    <property type="protein sequence ID" value="BAA02186.1"/>
    <property type="molecule type" value="Genomic_DNA"/>
</dbReference>
<dbReference type="CCDS" id="CCDS22637.1"/>
<dbReference type="PIR" id="S03163">
    <property type="entry name" value="IJMSCP"/>
</dbReference>
<dbReference type="RefSeq" id="NP_001032898.1">
    <property type="nucleotide sequence ID" value="NM_001037809.5"/>
</dbReference>
<dbReference type="PDB" id="4NQQ">
    <property type="method" value="X-ray"/>
    <property type="resolution" value="3.20 A"/>
    <property type="chains" value="A/B/C/D=100-312"/>
</dbReference>
<dbReference type="PDBsum" id="4NQQ"/>
<dbReference type="SMR" id="P10287"/>
<dbReference type="FunCoup" id="P10287">
    <property type="interactions" value="212"/>
</dbReference>
<dbReference type="STRING" id="10090.ENSMUSP00000079613"/>
<dbReference type="GlyCosmos" id="P10287">
    <property type="glycosylation" value="2 sites, No reported glycans"/>
</dbReference>
<dbReference type="GlyGen" id="P10287">
    <property type="glycosylation" value="3 sites, 1 O-linked glycan (1 site)"/>
</dbReference>
<dbReference type="iPTMnet" id="P10287"/>
<dbReference type="PhosphoSitePlus" id="P10287"/>
<dbReference type="PaxDb" id="10090-ENSMUSP00000079613"/>
<dbReference type="PeptideAtlas" id="P10287"/>
<dbReference type="ProteomicsDB" id="265499"/>
<dbReference type="Antibodypedia" id="942">
    <property type="antibodies" value="975 antibodies from 43 providers"/>
</dbReference>
<dbReference type="DNASU" id="12560"/>
<dbReference type="Ensembl" id="ENSMUST00000080797.8">
    <property type="protein sequence ID" value="ENSMUSP00000079613.7"/>
    <property type="gene ID" value="ENSMUSG00000061048.9"/>
</dbReference>
<dbReference type="GeneID" id="12560"/>
<dbReference type="KEGG" id="mmu:12560"/>
<dbReference type="UCSC" id="uc009ngh.2">
    <property type="organism name" value="mouse"/>
</dbReference>
<dbReference type="AGR" id="MGI:88356"/>
<dbReference type="CTD" id="1001"/>
<dbReference type="MGI" id="MGI:88356">
    <property type="gene designation" value="Cdh3"/>
</dbReference>
<dbReference type="VEuPathDB" id="HostDB:ENSMUSG00000061048"/>
<dbReference type="eggNOG" id="KOG3594">
    <property type="taxonomic scope" value="Eukaryota"/>
</dbReference>
<dbReference type="GeneTree" id="ENSGT00940000154848"/>
<dbReference type="HOGENOM" id="CLU_005284_2_1_1"/>
<dbReference type="InParanoid" id="P10287"/>
<dbReference type="OMA" id="EPVCTYT"/>
<dbReference type="OrthoDB" id="6079678at2759"/>
<dbReference type="PhylomeDB" id="P10287"/>
<dbReference type="TreeFam" id="TF316817"/>
<dbReference type="Reactome" id="R-MMU-418990">
    <property type="pathway name" value="Adherens junctions interactions"/>
</dbReference>
<dbReference type="BioGRID-ORCS" id="12560">
    <property type="hits" value="4 hits in 79 CRISPR screens"/>
</dbReference>
<dbReference type="ChiTaRS" id="Cdh3">
    <property type="organism name" value="mouse"/>
</dbReference>
<dbReference type="EvolutionaryTrace" id="P10287"/>
<dbReference type="PRO" id="PR:P10287"/>
<dbReference type="Proteomes" id="UP000000589">
    <property type="component" value="Chromosome 8"/>
</dbReference>
<dbReference type="RNAct" id="P10287">
    <property type="molecule type" value="protein"/>
</dbReference>
<dbReference type="Bgee" id="ENSMUSG00000061048">
    <property type="expression patterns" value="Expressed in ectoplacental cone and 148 other cell types or tissues"/>
</dbReference>
<dbReference type="GO" id="GO:0005912">
    <property type="term" value="C:adherens junction"/>
    <property type="evidence" value="ECO:0000314"/>
    <property type="project" value="MGI"/>
</dbReference>
<dbReference type="GO" id="GO:0005886">
    <property type="term" value="C:plasma membrane"/>
    <property type="evidence" value="ECO:0000314"/>
    <property type="project" value="MGI"/>
</dbReference>
<dbReference type="GO" id="GO:0005509">
    <property type="term" value="F:calcium ion binding"/>
    <property type="evidence" value="ECO:0007669"/>
    <property type="project" value="InterPro"/>
</dbReference>
<dbReference type="GO" id="GO:0098609">
    <property type="term" value="P:cell-cell adhesion"/>
    <property type="evidence" value="ECO:0000315"/>
    <property type="project" value="MGI"/>
</dbReference>
<dbReference type="GO" id="GO:0022405">
    <property type="term" value="P:hair cycle process"/>
    <property type="evidence" value="ECO:0007669"/>
    <property type="project" value="Ensembl"/>
</dbReference>
<dbReference type="GO" id="GO:0007156">
    <property type="term" value="P:homophilic cell adhesion via plasma membrane adhesion molecules"/>
    <property type="evidence" value="ECO:0007669"/>
    <property type="project" value="InterPro"/>
</dbReference>
<dbReference type="GO" id="GO:0031424">
    <property type="term" value="P:keratinization"/>
    <property type="evidence" value="ECO:0007669"/>
    <property type="project" value="Ensembl"/>
</dbReference>
<dbReference type="GO" id="GO:0051796">
    <property type="term" value="P:negative regulation of timing of catagen"/>
    <property type="evidence" value="ECO:0007669"/>
    <property type="project" value="Ensembl"/>
</dbReference>
<dbReference type="GO" id="GO:0030512">
    <property type="term" value="P:negative regulation of transforming growth factor beta receptor signaling pathway"/>
    <property type="evidence" value="ECO:0007669"/>
    <property type="project" value="Ensembl"/>
</dbReference>
<dbReference type="GO" id="GO:0090263">
    <property type="term" value="P:positive regulation of canonical Wnt signaling pathway"/>
    <property type="evidence" value="ECO:0007669"/>
    <property type="project" value="Ensembl"/>
</dbReference>
<dbReference type="GO" id="GO:0010628">
    <property type="term" value="P:positive regulation of gene expression"/>
    <property type="evidence" value="ECO:0007669"/>
    <property type="project" value="Ensembl"/>
</dbReference>
<dbReference type="GO" id="GO:0043568">
    <property type="term" value="P:positive regulation of insulin-like growth factor receptor signaling pathway"/>
    <property type="evidence" value="ECO:0007669"/>
    <property type="project" value="Ensembl"/>
</dbReference>
<dbReference type="GO" id="GO:0010838">
    <property type="term" value="P:positive regulation of keratinocyte proliferation"/>
    <property type="evidence" value="ECO:0007669"/>
    <property type="project" value="Ensembl"/>
</dbReference>
<dbReference type="GO" id="GO:0048023">
    <property type="term" value="P:positive regulation of melanin biosynthetic process"/>
    <property type="evidence" value="ECO:0007669"/>
    <property type="project" value="Ensembl"/>
</dbReference>
<dbReference type="GO" id="GO:1902910">
    <property type="term" value="P:positive regulation of melanosome transport"/>
    <property type="evidence" value="ECO:0007669"/>
    <property type="project" value="Ensembl"/>
</dbReference>
<dbReference type="GO" id="GO:0001895">
    <property type="term" value="P:retina homeostasis"/>
    <property type="evidence" value="ECO:0007669"/>
    <property type="project" value="Ensembl"/>
</dbReference>
<dbReference type="CDD" id="cd11304">
    <property type="entry name" value="Cadherin_repeat"/>
    <property type="match status" value="3"/>
</dbReference>
<dbReference type="FunFam" id="2.60.40.60:FF:000011">
    <property type="entry name" value="Cadherin 1"/>
    <property type="match status" value="1"/>
</dbReference>
<dbReference type="FunFam" id="2.60.40.60:FF:000019">
    <property type="entry name" value="Cadherin 2"/>
    <property type="match status" value="1"/>
</dbReference>
<dbReference type="FunFam" id="2.60.40.60:FF:000022">
    <property type="entry name" value="Cadherin 2"/>
    <property type="match status" value="1"/>
</dbReference>
<dbReference type="FunFam" id="2.60.40.60:FF:000027">
    <property type="entry name" value="Cadherin 2"/>
    <property type="match status" value="1"/>
</dbReference>
<dbReference type="FunFam" id="4.10.900.10:FF:000001">
    <property type="entry name" value="Cadherin 2"/>
    <property type="match status" value="1"/>
</dbReference>
<dbReference type="FunFam" id="2.60.40.60:FF:000031">
    <property type="entry name" value="Cadherin 3"/>
    <property type="match status" value="1"/>
</dbReference>
<dbReference type="Gene3D" id="2.60.40.60">
    <property type="entry name" value="Cadherins"/>
    <property type="match status" value="5"/>
</dbReference>
<dbReference type="Gene3D" id="4.10.900.10">
    <property type="entry name" value="TCF3-CBD (Catenin binding domain)"/>
    <property type="match status" value="1"/>
</dbReference>
<dbReference type="InterPro" id="IPR039808">
    <property type="entry name" value="Cadherin"/>
</dbReference>
<dbReference type="InterPro" id="IPR002126">
    <property type="entry name" value="Cadherin-like_dom"/>
</dbReference>
<dbReference type="InterPro" id="IPR015919">
    <property type="entry name" value="Cadherin-like_sf"/>
</dbReference>
<dbReference type="InterPro" id="IPR020894">
    <property type="entry name" value="Cadherin_CS"/>
</dbReference>
<dbReference type="InterPro" id="IPR000233">
    <property type="entry name" value="Cadherin_Y-type_LIR"/>
</dbReference>
<dbReference type="InterPro" id="IPR027397">
    <property type="entry name" value="Catenin-bd_sf"/>
</dbReference>
<dbReference type="PANTHER" id="PTHR24027">
    <property type="entry name" value="CADHERIN-23"/>
    <property type="match status" value="1"/>
</dbReference>
<dbReference type="PANTHER" id="PTHR24027:SF446">
    <property type="entry name" value="CADHERIN-3"/>
    <property type="match status" value="1"/>
</dbReference>
<dbReference type="Pfam" id="PF01049">
    <property type="entry name" value="CADH_Y-type_LIR"/>
    <property type="match status" value="1"/>
</dbReference>
<dbReference type="Pfam" id="PF00028">
    <property type="entry name" value="Cadherin"/>
    <property type="match status" value="4"/>
</dbReference>
<dbReference type="PRINTS" id="PR00205">
    <property type="entry name" value="CADHERIN"/>
</dbReference>
<dbReference type="SMART" id="SM00112">
    <property type="entry name" value="CA"/>
    <property type="match status" value="4"/>
</dbReference>
<dbReference type="SUPFAM" id="SSF49313">
    <property type="entry name" value="Cadherin-like"/>
    <property type="match status" value="5"/>
</dbReference>
<dbReference type="PROSITE" id="PS00232">
    <property type="entry name" value="CADHERIN_1"/>
    <property type="match status" value="3"/>
</dbReference>
<dbReference type="PROSITE" id="PS50268">
    <property type="entry name" value="CADHERIN_2"/>
    <property type="match status" value="4"/>
</dbReference>
<sequence length="822" mass="90612">MELLSGPHAFLLLLLQVCWLRSVVSEPYRAGFIGEAGVTLEVEGTDLEPSQVLGKVALAGQGMHHADNGDIIMLTRGTVQGGKDAMHSPPTRILRRRKREWVMPPIFVPENGKGPFPQRLNQLKSNKDRGTKIFYSITGPGADSPPEGVFTIEKESGWLLLHMPLDREKIVKYELYGHAVSENGASVEEPMNISIIVTDQNDNKPKFTQDTFRGSVLEGVMPGTSVMQVTATDEDDAVNTYNGVVAYSIHSQEPKEPHDLMFTIHKSTGTISVISSGLDREKVPEYRLTVQATDMDGEGSTTTAEAVVQILDANDNAPEFEPQKYEAWVPENEVGHEVQRLTVTDLDVPNSPAWRATYHIVGGDDGDHFTITTHPETNQGVLTTKKGLDFEAQDQHTLYVEVTNEAPFAVKLPTATATVVVHVKDVNEAPVFVPPSKVIEAQEGISIGELVCIYTAQDPDKEDQKISYTISRDPANWLAVDPDSGQITAAGILDREDEQFVKNNVYEVMVLATDSGNPPTTGTGTLLLTLTDINDHGPIPEPRQIIICNQSPVPQVLNITDKDLSPNSSPFQAQLTHDSDIYWMAEVSEKGDTVALSLKKFLKQDTYDLHLSLSDHGNREQLTMIRATVCDCHGQVFNDCPRPWKGGFILPILGAVLALLTLLLALLLLVRKKRKVKEPLLLPEDDTRDNVFYYGEEGGGEEDQDYDITQLHRGLEARPEVVLRNDVVPTFIPTPMYRPRPANPDEIGNFIIENLKAANTDPTAPPYDSLLVFDYEGSGSDAASLSSLTTSASDQDQDYNYLNEWGSRFKKLADMYGGGEDD</sequence>
<gene>
    <name type="primary">Cdh3</name>
    <name type="synonym">Cdhp</name>
</gene>
<accession>P10287</accession>
<accession>Q61465</accession>
<accession>Q8BSL6</accession>
<reference key="1">
    <citation type="journal article" date="1987" name="EMBO J.">
        <title>Isolation of placental cadherin cDNA: identification of a novel gene family of cell-cell adhesion molecules.</title>
        <authorList>
            <person name="Nose A."/>
            <person name="Nagafuchi A."/>
            <person name="Takeichi M."/>
        </authorList>
    </citation>
    <scope>NUCLEOTIDE SEQUENCE [MRNA]</scope>
</reference>
<reference key="2">
    <citation type="journal article" date="2005" name="Science">
        <title>The transcriptional landscape of the mammalian genome.</title>
        <authorList>
            <person name="Carninci P."/>
            <person name="Kasukawa T."/>
            <person name="Katayama S."/>
            <person name="Gough J."/>
            <person name="Frith M.C."/>
            <person name="Maeda N."/>
            <person name="Oyama R."/>
            <person name="Ravasi T."/>
            <person name="Lenhard B."/>
            <person name="Wells C."/>
            <person name="Kodzius R."/>
            <person name="Shimokawa K."/>
            <person name="Bajic V.B."/>
            <person name="Brenner S.E."/>
            <person name="Batalov S."/>
            <person name="Forrest A.R."/>
            <person name="Zavolan M."/>
            <person name="Davis M.J."/>
            <person name="Wilming L.G."/>
            <person name="Aidinis V."/>
            <person name="Allen J.E."/>
            <person name="Ambesi-Impiombato A."/>
            <person name="Apweiler R."/>
            <person name="Aturaliya R.N."/>
            <person name="Bailey T.L."/>
            <person name="Bansal M."/>
            <person name="Baxter L."/>
            <person name="Beisel K.W."/>
            <person name="Bersano T."/>
            <person name="Bono H."/>
            <person name="Chalk A.M."/>
            <person name="Chiu K.P."/>
            <person name="Choudhary V."/>
            <person name="Christoffels A."/>
            <person name="Clutterbuck D.R."/>
            <person name="Crowe M.L."/>
            <person name="Dalla E."/>
            <person name="Dalrymple B.P."/>
            <person name="de Bono B."/>
            <person name="Della Gatta G."/>
            <person name="di Bernardo D."/>
            <person name="Down T."/>
            <person name="Engstrom P."/>
            <person name="Fagiolini M."/>
            <person name="Faulkner G."/>
            <person name="Fletcher C.F."/>
            <person name="Fukushima T."/>
            <person name="Furuno M."/>
            <person name="Futaki S."/>
            <person name="Gariboldi M."/>
            <person name="Georgii-Hemming P."/>
            <person name="Gingeras T.R."/>
            <person name="Gojobori T."/>
            <person name="Green R.E."/>
            <person name="Gustincich S."/>
            <person name="Harbers M."/>
            <person name="Hayashi Y."/>
            <person name="Hensch T.K."/>
            <person name="Hirokawa N."/>
            <person name="Hill D."/>
            <person name="Huminiecki L."/>
            <person name="Iacono M."/>
            <person name="Ikeo K."/>
            <person name="Iwama A."/>
            <person name="Ishikawa T."/>
            <person name="Jakt M."/>
            <person name="Kanapin A."/>
            <person name="Katoh M."/>
            <person name="Kawasawa Y."/>
            <person name="Kelso J."/>
            <person name="Kitamura H."/>
            <person name="Kitano H."/>
            <person name="Kollias G."/>
            <person name="Krishnan S.P."/>
            <person name="Kruger A."/>
            <person name="Kummerfeld S.K."/>
            <person name="Kurochkin I.V."/>
            <person name="Lareau L.F."/>
            <person name="Lazarevic D."/>
            <person name="Lipovich L."/>
            <person name="Liu J."/>
            <person name="Liuni S."/>
            <person name="McWilliam S."/>
            <person name="Madan Babu M."/>
            <person name="Madera M."/>
            <person name="Marchionni L."/>
            <person name="Matsuda H."/>
            <person name="Matsuzawa S."/>
            <person name="Miki H."/>
            <person name="Mignone F."/>
            <person name="Miyake S."/>
            <person name="Morris K."/>
            <person name="Mottagui-Tabar S."/>
            <person name="Mulder N."/>
            <person name="Nakano N."/>
            <person name="Nakauchi H."/>
            <person name="Ng P."/>
            <person name="Nilsson R."/>
            <person name="Nishiguchi S."/>
            <person name="Nishikawa S."/>
            <person name="Nori F."/>
            <person name="Ohara O."/>
            <person name="Okazaki Y."/>
            <person name="Orlando V."/>
            <person name="Pang K.C."/>
            <person name="Pavan W.J."/>
            <person name="Pavesi G."/>
            <person name="Pesole G."/>
            <person name="Petrovsky N."/>
            <person name="Piazza S."/>
            <person name="Reed J."/>
            <person name="Reid J.F."/>
            <person name="Ring B.Z."/>
            <person name="Ringwald M."/>
            <person name="Rost B."/>
            <person name="Ruan Y."/>
            <person name="Salzberg S.L."/>
            <person name="Sandelin A."/>
            <person name="Schneider C."/>
            <person name="Schoenbach C."/>
            <person name="Sekiguchi K."/>
            <person name="Semple C.A."/>
            <person name="Seno S."/>
            <person name="Sessa L."/>
            <person name="Sheng Y."/>
            <person name="Shibata Y."/>
            <person name="Shimada H."/>
            <person name="Shimada K."/>
            <person name="Silva D."/>
            <person name="Sinclair B."/>
            <person name="Sperling S."/>
            <person name="Stupka E."/>
            <person name="Sugiura K."/>
            <person name="Sultana R."/>
            <person name="Takenaka Y."/>
            <person name="Taki K."/>
            <person name="Tammoja K."/>
            <person name="Tan S.L."/>
            <person name="Tang S."/>
            <person name="Taylor M.S."/>
            <person name="Tegner J."/>
            <person name="Teichmann S.A."/>
            <person name="Ueda H.R."/>
            <person name="van Nimwegen E."/>
            <person name="Verardo R."/>
            <person name="Wei C.L."/>
            <person name="Yagi K."/>
            <person name="Yamanishi H."/>
            <person name="Zabarovsky E."/>
            <person name="Zhu S."/>
            <person name="Zimmer A."/>
            <person name="Hide W."/>
            <person name="Bult C."/>
            <person name="Grimmond S.M."/>
            <person name="Teasdale R.D."/>
            <person name="Liu E.T."/>
            <person name="Brusic V."/>
            <person name="Quackenbush J."/>
            <person name="Wahlestedt C."/>
            <person name="Mattick J.S."/>
            <person name="Hume D.A."/>
            <person name="Kai C."/>
            <person name="Sasaki D."/>
            <person name="Tomaru Y."/>
            <person name="Fukuda S."/>
            <person name="Kanamori-Katayama M."/>
            <person name="Suzuki M."/>
            <person name="Aoki J."/>
            <person name="Arakawa T."/>
            <person name="Iida J."/>
            <person name="Imamura K."/>
            <person name="Itoh M."/>
            <person name="Kato T."/>
            <person name="Kawaji H."/>
            <person name="Kawagashira N."/>
            <person name="Kawashima T."/>
            <person name="Kojima M."/>
            <person name="Kondo S."/>
            <person name="Konno H."/>
            <person name="Nakano K."/>
            <person name="Ninomiya N."/>
            <person name="Nishio T."/>
            <person name="Okada M."/>
            <person name="Plessy C."/>
            <person name="Shibata K."/>
            <person name="Shiraki T."/>
            <person name="Suzuki S."/>
            <person name="Tagami M."/>
            <person name="Waki K."/>
            <person name="Watahiki A."/>
            <person name="Okamura-Oho Y."/>
            <person name="Suzuki H."/>
            <person name="Kawai J."/>
            <person name="Hayashizaki Y."/>
        </authorList>
    </citation>
    <scope>NUCLEOTIDE SEQUENCE [LARGE SCALE MRNA]</scope>
    <source>
        <strain>C57BL/6J</strain>
        <tissue>Forelimb</tissue>
    </source>
</reference>
<reference key="3">
    <citation type="submission" date="2005-07" db="EMBL/GenBank/DDBJ databases">
        <authorList>
            <person name="Mural R.J."/>
            <person name="Adams M.D."/>
            <person name="Myers E.W."/>
            <person name="Smith H.O."/>
            <person name="Venter J.C."/>
        </authorList>
    </citation>
    <scope>NUCLEOTIDE SEQUENCE [LARGE SCALE GENOMIC DNA]</scope>
</reference>
<reference key="4">
    <citation type="journal article" date="2004" name="Genome Res.">
        <title>The status, quality, and expansion of the NIH full-length cDNA project: the Mammalian Gene Collection (MGC).</title>
        <authorList>
            <consortium name="The MGC Project Team"/>
        </authorList>
    </citation>
    <scope>NUCLEOTIDE SEQUENCE [LARGE SCALE MRNA]</scope>
    <source>
        <strain>C57BL/6J</strain>
        <tissue>Embryo</tissue>
    </source>
</reference>
<reference key="5">
    <citation type="journal article" date="1991" name="Nucleic Acids Res.">
        <title>Genomic organization and chromosomal mapping of the mouse P-cadherin gene.</title>
        <authorList>
            <person name="Hatta M."/>
            <person name="Miyatani S."/>
            <person name="Copeland N.G."/>
            <person name="Gilbert D.J."/>
            <person name="Jenkins N.A."/>
            <person name="Takeichi M."/>
        </authorList>
    </citation>
    <scope>PARTIAL NUCLEOTIDE SEQUENCE [GENOMIC DNA]</scope>
    <source>
        <strain>C57BL/6J</strain>
        <tissue>Embryo</tissue>
    </source>
</reference>
<reference key="6">
    <citation type="journal article" date="1993" name="J. Mol. Biol.">
        <title>The 5' flanking sequences of the mouse P-cadherin gene. Homologies to 5' sequences of the E-cadherin gene and identification of a first 215 base-pair intron.</title>
        <authorList>
            <person name="Faraldo M.L."/>
            <person name="Cano A."/>
        </authorList>
    </citation>
    <scope>NUCLEOTIDE SEQUENCE [GENOMIC DNA] OF 1-55</scope>
</reference>
<reference key="7">
    <citation type="journal article" date="1994" name="Dev. Growth Differ.">
        <title>Complex cell type-specific transcriptional regulation by the promoter and an intron of the mouse P-cadherin gene.</title>
        <authorList>
            <person name="Hatta M."/>
            <person name="Takeichi M."/>
        </authorList>
    </citation>
    <scope>NUCLEOTIDE SEQUENCE OF 1-55</scope>
    <source>
        <strain>C57BL/6J</strain>
    </source>
</reference>
<reference key="8">
    <citation type="journal article" date="1996" name="Biol. Reprod.">
        <title>A comprehensive survey of the cadherins expressed in the testes of fetal, immature, and adult mice utilizing the polymerase chain reaction.</title>
        <authorList>
            <person name="Munro S.B."/>
            <person name="Blaschuk O.W."/>
        </authorList>
    </citation>
    <scope>DEVELOPMENTAL STAGE</scope>
    <source>
        <strain>C57BL/6J</strain>
        <tissue>Testis</tissue>
    </source>
</reference>
<proteinExistence type="evidence at protein level"/>
<evidence type="ECO:0000250" key="1"/>
<evidence type="ECO:0000255" key="2"/>
<evidence type="ECO:0000255" key="3">
    <source>
        <dbReference type="PROSITE-ProRule" id="PRU00043"/>
    </source>
</evidence>
<evidence type="ECO:0000269" key="4">
    <source>
    </source>
</evidence>
<evidence type="ECO:0000305" key="5"/>
<evidence type="ECO:0007829" key="6">
    <source>
        <dbReference type="PDB" id="4NQQ"/>
    </source>
</evidence>
<name>CADH3_MOUSE</name>
<keyword id="KW-0002">3D-structure</keyword>
<keyword id="KW-0106">Calcium</keyword>
<keyword id="KW-0130">Cell adhesion</keyword>
<keyword id="KW-1003">Cell membrane</keyword>
<keyword id="KW-0165">Cleavage on pair of basic residues</keyword>
<keyword id="KW-0325">Glycoprotein</keyword>
<keyword id="KW-0472">Membrane</keyword>
<keyword id="KW-0479">Metal-binding</keyword>
<keyword id="KW-1185">Reference proteome</keyword>
<keyword id="KW-0677">Repeat</keyword>
<keyword id="KW-0732">Signal</keyword>
<keyword id="KW-0812">Transmembrane</keyword>
<keyword id="KW-1133">Transmembrane helix</keyword>
<comment type="function">
    <text>Cadherins are calcium-dependent cell adhesion proteins. They preferentially interact with themselves in a homophilic manner in connecting cells; cadherins may thus contribute to the sorting of heterogeneous cell types.</text>
</comment>
<comment type="subunit">
    <text evidence="1">Interacts with CDCP1 and CTNNB1.</text>
</comment>
<comment type="subcellular location">
    <subcellularLocation>
        <location>Cell membrane</location>
        <topology>Single-pass type I membrane protein</topology>
    </subcellularLocation>
</comment>
<comment type="developmental stage">
    <text evidence="4">Expression is high in both fetal and newborn testis but minimal in testis of 7-day-old animals. Not detected in testis of 21-day-old or adult.</text>
</comment>
<comment type="domain">
    <text evidence="1">Three calcium ions are usually bound at the interface of each cadherin domain and rigidify the connections, imparting a strong curvature to the full-length ectodomain.</text>
</comment>